<name>RSMA_SHISS</name>
<reference key="1">
    <citation type="journal article" date="2005" name="Nucleic Acids Res.">
        <title>Genome dynamics and diversity of Shigella species, the etiologic agents of bacillary dysentery.</title>
        <authorList>
            <person name="Yang F."/>
            <person name="Yang J."/>
            <person name="Zhang X."/>
            <person name="Chen L."/>
            <person name="Jiang Y."/>
            <person name="Yan Y."/>
            <person name="Tang X."/>
            <person name="Wang J."/>
            <person name="Xiong Z."/>
            <person name="Dong J."/>
            <person name="Xue Y."/>
            <person name="Zhu Y."/>
            <person name="Xu X."/>
            <person name="Sun L."/>
            <person name="Chen S."/>
            <person name="Nie H."/>
            <person name="Peng J."/>
            <person name="Xu J."/>
            <person name="Wang Y."/>
            <person name="Yuan Z."/>
            <person name="Wen Y."/>
            <person name="Yao Z."/>
            <person name="Shen Y."/>
            <person name="Qiang B."/>
            <person name="Hou Y."/>
            <person name="Yu J."/>
            <person name="Jin Q."/>
        </authorList>
    </citation>
    <scope>NUCLEOTIDE SEQUENCE [LARGE SCALE GENOMIC DNA]</scope>
    <source>
        <strain>Ss046</strain>
    </source>
</reference>
<feature type="chain" id="PRO_0000257347" description="Ribosomal RNA small subunit methyltransferase A">
    <location>
        <begin position="1"/>
        <end position="273"/>
    </location>
</feature>
<feature type="binding site" evidence="1">
    <location>
        <position position="18"/>
    </location>
    <ligand>
        <name>S-adenosyl-L-methionine</name>
        <dbReference type="ChEBI" id="CHEBI:59789"/>
    </ligand>
</feature>
<feature type="binding site" evidence="1">
    <location>
        <position position="20"/>
    </location>
    <ligand>
        <name>S-adenosyl-L-methionine</name>
        <dbReference type="ChEBI" id="CHEBI:59789"/>
    </ligand>
</feature>
<feature type="binding site" evidence="1">
    <location>
        <position position="45"/>
    </location>
    <ligand>
        <name>S-adenosyl-L-methionine</name>
        <dbReference type="ChEBI" id="CHEBI:59789"/>
    </ligand>
</feature>
<feature type="binding site" evidence="1">
    <location>
        <position position="66"/>
    </location>
    <ligand>
        <name>S-adenosyl-L-methionine</name>
        <dbReference type="ChEBI" id="CHEBI:59789"/>
    </ligand>
</feature>
<feature type="binding site" evidence="1">
    <location>
        <position position="91"/>
    </location>
    <ligand>
        <name>S-adenosyl-L-methionine</name>
        <dbReference type="ChEBI" id="CHEBI:59789"/>
    </ligand>
</feature>
<feature type="binding site" evidence="1">
    <location>
        <position position="113"/>
    </location>
    <ligand>
        <name>S-adenosyl-L-methionine</name>
        <dbReference type="ChEBI" id="CHEBI:59789"/>
    </ligand>
</feature>
<sequence>MNNRVHQGHLARKRFGQNFLNDQFVIDSIVSAINPQKGQAMVEIGPGLAALTEPVGERLDQLTVIELDRDLAARLQTHPFLGPKLTIYQQDAMTFNFGELAEKMGQPLRVFGNLPYNISTPLMFHLFSYTDAIADMHFMLQKEVVNRLVAGPNSKAYGRLSVMAQYYCNVIPVLEVPPSAFTPPPKVDSAVVRLVPHATMPHPVKDVRVLSRITTEAFNQRRKTIRNSLGNLFSVEVLTGMGIDPAMRAENISVAQYCQMANYLAENAPLQES</sequence>
<protein>
    <recommendedName>
        <fullName evidence="1">Ribosomal RNA small subunit methyltransferase A</fullName>
        <ecNumber evidence="1">2.1.1.182</ecNumber>
    </recommendedName>
    <alternativeName>
        <fullName evidence="1">16S rRNA (adenine(1518)-N(6)/adenine(1519)-N(6))-dimethyltransferase</fullName>
    </alternativeName>
    <alternativeName>
        <fullName evidence="1">16S rRNA dimethyladenosine transferase</fullName>
    </alternativeName>
    <alternativeName>
        <fullName evidence="1">16S rRNA dimethylase</fullName>
    </alternativeName>
    <alternativeName>
        <fullName evidence="1">S-adenosylmethionine-6-N', N'-adenosyl(rRNA) dimethyltransferase</fullName>
    </alternativeName>
</protein>
<keyword id="KW-0963">Cytoplasm</keyword>
<keyword id="KW-0489">Methyltransferase</keyword>
<keyword id="KW-1185">Reference proteome</keyword>
<keyword id="KW-0694">RNA-binding</keyword>
<keyword id="KW-0698">rRNA processing</keyword>
<keyword id="KW-0949">S-adenosyl-L-methionine</keyword>
<keyword id="KW-0808">Transferase</keyword>
<comment type="function">
    <text evidence="1">Specifically dimethylates two adjacent adenosines (A1518 and A1519) in the loop of a conserved hairpin near the 3'-end of 16S rRNA in the 30S particle. May play a critical role in biogenesis of 30S subunits.</text>
</comment>
<comment type="catalytic activity">
    <reaction evidence="1">
        <text>adenosine(1518)/adenosine(1519) in 16S rRNA + 4 S-adenosyl-L-methionine = N(6)-dimethyladenosine(1518)/N(6)-dimethyladenosine(1519) in 16S rRNA + 4 S-adenosyl-L-homocysteine + 4 H(+)</text>
        <dbReference type="Rhea" id="RHEA:19609"/>
        <dbReference type="Rhea" id="RHEA-COMP:10232"/>
        <dbReference type="Rhea" id="RHEA-COMP:10233"/>
        <dbReference type="ChEBI" id="CHEBI:15378"/>
        <dbReference type="ChEBI" id="CHEBI:57856"/>
        <dbReference type="ChEBI" id="CHEBI:59789"/>
        <dbReference type="ChEBI" id="CHEBI:74411"/>
        <dbReference type="ChEBI" id="CHEBI:74493"/>
        <dbReference type="EC" id="2.1.1.182"/>
    </reaction>
</comment>
<comment type="subcellular location">
    <subcellularLocation>
        <location evidence="1">Cytoplasm</location>
    </subcellularLocation>
</comment>
<comment type="similarity">
    <text evidence="1">Belongs to the class I-like SAM-binding methyltransferase superfamily. rRNA adenine N(6)-methyltransferase family. RsmA subfamily.</text>
</comment>
<proteinExistence type="inferred from homology"/>
<dbReference type="EC" id="2.1.1.182" evidence="1"/>
<dbReference type="EMBL" id="CP000038">
    <property type="protein sequence ID" value="AAZ86854.1"/>
    <property type="molecule type" value="Genomic_DNA"/>
</dbReference>
<dbReference type="RefSeq" id="WP_001065381.1">
    <property type="nucleotide sequence ID" value="NC_007384.1"/>
</dbReference>
<dbReference type="SMR" id="Q3Z5V8"/>
<dbReference type="GeneID" id="93777384"/>
<dbReference type="KEGG" id="ssn:SSON_0059"/>
<dbReference type="HOGENOM" id="CLU_041220_0_1_6"/>
<dbReference type="Proteomes" id="UP000002529">
    <property type="component" value="Chromosome"/>
</dbReference>
<dbReference type="GO" id="GO:0005829">
    <property type="term" value="C:cytosol"/>
    <property type="evidence" value="ECO:0007669"/>
    <property type="project" value="TreeGrafter"/>
</dbReference>
<dbReference type="GO" id="GO:0052908">
    <property type="term" value="F:16S rRNA (adenine(1518)-N(6)/adenine(1519)-N(6))-dimethyltransferase activity"/>
    <property type="evidence" value="ECO:0007669"/>
    <property type="project" value="UniProtKB-EC"/>
</dbReference>
<dbReference type="GO" id="GO:0003723">
    <property type="term" value="F:RNA binding"/>
    <property type="evidence" value="ECO:0007669"/>
    <property type="project" value="UniProtKB-KW"/>
</dbReference>
<dbReference type="FunFam" id="1.10.8.100:FF:000001">
    <property type="entry name" value="Ribosomal RNA small subunit methyltransferase A"/>
    <property type="match status" value="1"/>
</dbReference>
<dbReference type="FunFam" id="3.40.50.150:FF:000006">
    <property type="entry name" value="Ribosomal RNA small subunit methyltransferase A"/>
    <property type="match status" value="1"/>
</dbReference>
<dbReference type="Gene3D" id="1.10.8.100">
    <property type="entry name" value="Ribosomal RNA adenine dimethylase-like, domain 2"/>
    <property type="match status" value="1"/>
</dbReference>
<dbReference type="Gene3D" id="3.40.50.150">
    <property type="entry name" value="Vaccinia Virus protein VP39"/>
    <property type="match status" value="1"/>
</dbReference>
<dbReference type="HAMAP" id="MF_00607">
    <property type="entry name" value="16SrRNA_methyltr_A"/>
    <property type="match status" value="1"/>
</dbReference>
<dbReference type="InterPro" id="IPR001737">
    <property type="entry name" value="KsgA/Erm"/>
</dbReference>
<dbReference type="InterPro" id="IPR023165">
    <property type="entry name" value="rRNA_Ade_diMease-like_C"/>
</dbReference>
<dbReference type="InterPro" id="IPR020596">
    <property type="entry name" value="rRNA_Ade_Mease_Trfase_CS"/>
</dbReference>
<dbReference type="InterPro" id="IPR020598">
    <property type="entry name" value="rRNA_Ade_methylase_Trfase_N"/>
</dbReference>
<dbReference type="InterPro" id="IPR011530">
    <property type="entry name" value="rRNA_adenine_dimethylase"/>
</dbReference>
<dbReference type="InterPro" id="IPR029063">
    <property type="entry name" value="SAM-dependent_MTases_sf"/>
</dbReference>
<dbReference type="NCBIfam" id="TIGR00755">
    <property type="entry name" value="ksgA"/>
    <property type="match status" value="1"/>
</dbReference>
<dbReference type="PANTHER" id="PTHR11727">
    <property type="entry name" value="DIMETHYLADENOSINE TRANSFERASE"/>
    <property type="match status" value="1"/>
</dbReference>
<dbReference type="PANTHER" id="PTHR11727:SF7">
    <property type="entry name" value="DIMETHYLADENOSINE TRANSFERASE-RELATED"/>
    <property type="match status" value="1"/>
</dbReference>
<dbReference type="Pfam" id="PF00398">
    <property type="entry name" value="RrnaAD"/>
    <property type="match status" value="1"/>
</dbReference>
<dbReference type="SMART" id="SM00650">
    <property type="entry name" value="rADc"/>
    <property type="match status" value="1"/>
</dbReference>
<dbReference type="SUPFAM" id="SSF53335">
    <property type="entry name" value="S-adenosyl-L-methionine-dependent methyltransferases"/>
    <property type="match status" value="1"/>
</dbReference>
<dbReference type="PROSITE" id="PS01131">
    <property type="entry name" value="RRNA_A_DIMETH"/>
    <property type="match status" value="1"/>
</dbReference>
<dbReference type="PROSITE" id="PS51689">
    <property type="entry name" value="SAM_RNA_A_N6_MT"/>
    <property type="match status" value="1"/>
</dbReference>
<organism>
    <name type="scientific">Shigella sonnei (strain Ss046)</name>
    <dbReference type="NCBI Taxonomy" id="300269"/>
    <lineage>
        <taxon>Bacteria</taxon>
        <taxon>Pseudomonadati</taxon>
        <taxon>Pseudomonadota</taxon>
        <taxon>Gammaproteobacteria</taxon>
        <taxon>Enterobacterales</taxon>
        <taxon>Enterobacteriaceae</taxon>
        <taxon>Shigella</taxon>
    </lineage>
</organism>
<accession>Q3Z5V8</accession>
<evidence type="ECO:0000255" key="1">
    <source>
        <dbReference type="HAMAP-Rule" id="MF_00607"/>
    </source>
</evidence>
<gene>
    <name evidence="1" type="primary">rsmA</name>
    <name evidence="1" type="synonym">ksgA</name>
    <name type="ordered locus">SSON_0059</name>
</gene>